<reference key="1">
    <citation type="journal article" date="1992" name="Cell">
        <title>SSL2, a suppressor of a stem-loop mutation in the HIS4 leader encodes the yeast homolog of human ERCC-3.</title>
        <authorList>
            <person name="Gulyas K.D."/>
            <person name="Donahue T.F."/>
        </authorList>
    </citation>
    <scope>NUCLEOTIDE SEQUENCE [GENOMIC DNA]</scope>
    <scope>VARIANT SUPPRESSOR MUTANT LEU-427</scope>
    <source>
        <strain>ATCC 204508 / S288c</strain>
    </source>
</reference>
<reference key="2">
    <citation type="journal article" date="1992" name="Proc. Natl. Acad. Sci. U.S.A.">
        <title>RAD25 (SSL2), the yeast homolog of the human Xeroderma pigmentosum group B DNA repair gene, is essential for viability.</title>
        <authorList>
            <person name="Park E.K."/>
            <person name="Guzder S.N."/>
            <person name="Weeda G."/>
            <person name="Hoeijmakers J.H."/>
            <person name="Prakash S."/>
            <person name="Prakash L."/>
        </authorList>
    </citation>
    <scope>NUCLEOTIDE SEQUENCE [GENOMIC DNA]</scope>
    <scope>DISRUPTION PHENOTYPE</scope>
    <scope>MUTAGENESIS OF LYS-392 AND 798-VAL--LYS-843</scope>
</reference>
<reference key="3">
    <citation type="journal article" date="1997" name="Nature">
        <title>The nucleotide sequence of Saccharomyces cerevisiae chromosome IX.</title>
        <authorList>
            <person name="Churcher C.M."/>
            <person name="Bowman S."/>
            <person name="Badcock K."/>
            <person name="Bankier A.T."/>
            <person name="Brown D."/>
            <person name="Chillingworth T."/>
            <person name="Connor R."/>
            <person name="Devlin K."/>
            <person name="Gentles S."/>
            <person name="Hamlin N."/>
            <person name="Harris D.E."/>
            <person name="Horsnell T."/>
            <person name="Hunt S."/>
            <person name="Jagels K."/>
            <person name="Jones M."/>
            <person name="Lye G."/>
            <person name="Moule S."/>
            <person name="Odell C."/>
            <person name="Pearson D."/>
            <person name="Rajandream M.A."/>
            <person name="Rice P."/>
            <person name="Rowley N."/>
            <person name="Skelton J."/>
            <person name="Smith V."/>
            <person name="Walsh S.V."/>
            <person name="Whitehead S."/>
            <person name="Barrell B.G."/>
        </authorList>
    </citation>
    <scope>NUCLEOTIDE SEQUENCE [LARGE SCALE GENOMIC DNA]</scope>
    <source>
        <strain>ATCC 204508 / S288c</strain>
    </source>
</reference>
<reference key="4">
    <citation type="journal article" date="2014" name="G3 (Bethesda)">
        <title>The reference genome sequence of Saccharomyces cerevisiae: Then and now.</title>
        <authorList>
            <person name="Engel S.R."/>
            <person name="Dietrich F.S."/>
            <person name="Fisk D.G."/>
            <person name="Binkley G."/>
            <person name="Balakrishnan R."/>
            <person name="Costanzo M.C."/>
            <person name="Dwight S.S."/>
            <person name="Hitz B.C."/>
            <person name="Karra K."/>
            <person name="Nash R.S."/>
            <person name="Weng S."/>
            <person name="Wong E.D."/>
            <person name="Lloyd P."/>
            <person name="Skrzypek M.S."/>
            <person name="Miyasato S.R."/>
            <person name="Simison M."/>
            <person name="Cherry J.M."/>
        </authorList>
    </citation>
    <scope>GENOME REANNOTATION</scope>
    <source>
        <strain>ATCC 204508 / S288c</strain>
    </source>
</reference>
<reference key="5">
    <citation type="journal article" date="2007" name="Genome Res.">
        <title>Approaching a complete repository of sequence-verified protein-encoding clones for Saccharomyces cerevisiae.</title>
        <authorList>
            <person name="Hu Y."/>
            <person name="Rolfs A."/>
            <person name="Bhullar B."/>
            <person name="Murthy T.V.S."/>
            <person name="Zhu C."/>
            <person name="Berger M.F."/>
            <person name="Camargo A.A."/>
            <person name="Kelley F."/>
            <person name="McCarron S."/>
            <person name="Jepson D."/>
            <person name="Richardson A."/>
            <person name="Raphael J."/>
            <person name="Moreira D."/>
            <person name="Taycher E."/>
            <person name="Zuo D."/>
            <person name="Mohr S."/>
            <person name="Kane M.F."/>
            <person name="Williamson J."/>
            <person name="Simpson A.J.G."/>
            <person name="Bulyk M.L."/>
            <person name="Harlow E."/>
            <person name="Marsischky G."/>
            <person name="Kolodner R.D."/>
            <person name="LaBaer J."/>
        </authorList>
    </citation>
    <scope>NUCLEOTIDE SEQUENCE [GENOMIC DNA]</scope>
    <source>
        <strain>ATCC 204508 / S288c</strain>
    </source>
</reference>
<reference key="6">
    <citation type="journal article" date="1993" name="Cell">
        <title>Dual roles of a multiprotein complex from S. cerevisiae in transcription and DNA repair.</title>
        <authorList>
            <person name="Feaver W.J."/>
            <person name="Svejstrup J.Q."/>
            <person name="Bardwell L."/>
            <person name="Bardwell A.J."/>
            <person name="Buratowski S."/>
            <person name="Gulyas K.D."/>
            <person name="Donahue T.F."/>
            <person name="Friedberg E.C."/>
            <person name="Kornberg R.D."/>
        </authorList>
    </citation>
    <scope>FUNCTION</scope>
</reference>
<reference key="7">
    <citation type="journal article" date="1993" name="Genes Dev.">
        <title>The Saccharomyces cerevisiae DNA repair gene RAD25 is required for transcription by RNA polymerase II.</title>
        <authorList>
            <person name="Qiu H."/>
            <person name="Park E."/>
            <person name="Prakash L."/>
            <person name="Prakash S."/>
        </authorList>
    </citation>
    <scope>FUNCTION</scope>
</reference>
<reference key="8">
    <citation type="journal article" date="1994" name="J. Biol. Chem.">
        <title>RNA polymerase transcription factor IIH holoenzyme from yeast.</title>
        <authorList>
            <person name="Svejstrup J.Q."/>
            <person name="Feaver W.J."/>
            <person name="LaPointe J."/>
            <person name="Kornberg R.D."/>
        </authorList>
    </citation>
    <scope>FUNCTION OF TFIIH IN RNA POLYMERASE II TRANSCRIPTION</scope>
</reference>
<reference key="9">
    <citation type="journal article" date="1994" name="Nature">
        <title>RAD25 is a DNA helicase required for DNA repair and RNA polymerase II transcription.</title>
        <authorList>
            <person name="Guzder S.N."/>
            <person name="Sung P."/>
            <person name="Bailly V."/>
            <person name="Prakash L."/>
            <person name="Prakash S."/>
        </authorList>
    </citation>
    <scope>FUNCTION AS A DNA HELICASE</scope>
    <scope>FUNCTION AS A DNA-DEPENDENT ATPASE</scope>
    <scope>COFACTOR</scope>
    <scope>BIOPHYSICOCHEMICAL PROPERTIES</scope>
    <scope>MUTAGENESIS OF LYS-392</scope>
</reference>
<reference key="10">
    <citation type="journal article" date="1995" name="Cell">
        <title>Different forms of TFIIH for transcription and DNA repair: holo-TFIIH and a nucleotide excision repairosome.</title>
        <authorList>
            <person name="Svejstrup J.Q."/>
            <person name="Wang Z."/>
            <person name="Feaver W.J."/>
            <person name="Wu X."/>
            <person name="Bushnell D.A."/>
            <person name="Donahue T.F."/>
            <person name="Friedberg E.C."/>
            <person name="Kornberg R.D."/>
        </authorList>
    </citation>
    <scope>FUNCTION</scope>
    <scope>SUBUNIT</scope>
</reference>
<reference key="11">
    <citation type="journal article" date="1996" name="J. Biol. Chem.">
        <title>Reconstitution of TFIIH and requirement of its DNA helicase subunits, Rad3 and Rad25, in the incision step of nucleotide excision repair.</title>
        <authorList>
            <person name="Sung P."/>
            <person name="Guzder S.N."/>
            <person name="Prakash L."/>
            <person name="Prakash S."/>
        </authorList>
    </citation>
    <scope>FUNCTION OF THE TFIIH CORE COMPLEX IN DNA REPAIR</scope>
</reference>
<reference key="12">
    <citation type="journal article" date="2003" name="J. Biol. Chem.">
        <title>Revised subunit structure of yeast transcription factor IIH (TFIIH) and reconciliation with human TFIIH.</title>
        <authorList>
            <person name="Takagi Y."/>
            <person name="Komori H."/>
            <person name="Chang W.-H."/>
            <person name="Hudmon A."/>
            <person name="Erdjument-Bromage H."/>
            <person name="Tempst P."/>
            <person name="Kornberg R.D."/>
        </authorList>
    </citation>
    <scope>IDENTIFICATION IN THE TFIIH CORE COMPLEX</scope>
</reference>
<reference key="13">
    <citation type="journal article" date="2003" name="Nature">
        <title>Global analysis of protein expression in yeast.</title>
        <authorList>
            <person name="Ghaemmaghami S."/>
            <person name="Huh W.-K."/>
            <person name="Bower K."/>
            <person name="Howson R.W."/>
            <person name="Belle A."/>
            <person name="Dephoure N."/>
            <person name="O'Shea E.K."/>
            <person name="Weissman J.S."/>
        </authorList>
    </citation>
    <scope>LEVEL OF PROTEIN EXPRESSION [LARGE SCALE ANALYSIS]</scope>
</reference>
<reference key="14">
    <citation type="journal article" date="2007" name="J. Proteome Res.">
        <title>Large-scale phosphorylation analysis of alpha-factor-arrested Saccharomyces cerevisiae.</title>
        <authorList>
            <person name="Li X."/>
            <person name="Gerber S.A."/>
            <person name="Rudner A.D."/>
            <person name="Beausoleil S.A."/>
            <person name="Haas W."/>
            <person name="Villen J."/>
            <person name="Elias J.E."/>
            <person name="Gygi S.P."/>
        </authorList>
    </citation>
    <scope>PHOSPHORYLATION [LARGE SCALE ANALYSIS] AT SER-752</scope>
    <scope>IDENTIFICATION BY MASS SPECTROMETRY [LARGE SCALE ANALYSIS]</scope>
    <source>
        <strain>ADR376</strain>
    </source>
</reference>
<reference key="15">
    <citation type="journal article" date="2012" name="Proc. Natl. Acad. Sci. U.S.A.">
        <title>Tfb6, a previously unidentified subunit of the general transcription factor TFIIH, facilitates dissociation of Ssl2 helicase after transcription initiation.</title>
        <authorList>
            <person name="Murakami K."/>
            <person name="Gibbons B.J."/>
            <person name="Davis R.E."/>
            <person name="Nagai S."/>
            <person name="Liu X."/>
            <person name="Robinson P.J."/>
            <person name="Wu T."/>
            <person name="Kaplan C.D."/>
            <person name="Kornberg R.D."/>
        </authorList>
    </citation>
    <scope>IDENTIFICATION BY MASS SPECTROMETRY</scope>
    <scope>SUBUNIT</scope>
</reference>
<reference key="16">
    <citation type="journal article" date="2015" name="Proc. Natl. Acad. Sci. U.S.A.">
        <title>Double-stranded DNA translocase activity of transcription factor TFIIH and the mechanism of RNA polymerase II open complex formation.</title>
        <authorList>
            <person name="Fishburn J."/>
            <person name="Tomko E."/>
            <person name="Galburt E."/>
            <person name="Hahn S."/>
        </authorList>
    </citation>
    <scope>FUNCTION AS A DNA TRANSLOCASE</scope>
    <scope>BIOPHYSICOCHEMICAL PROPERTIES</scope>
    <scope>SUBUNIT</scope>
    <scope>MUTAGENESIS OF GLU-489</scope>
</reference>
<reference evidence="22" key="17">
    <citation type="journal article" date="2015" name="Proc. Natl. Acad. Sci. U.S.A.">
        <title>Structure of an RNA polymerase II preinitiation complex.</title>
        <authorList>
            <person name="Murakami K."/>
            <person name="Tsai K.L."/>
            <person name="Kalisman N."/>
            <person name="Bushnell D.A."/>
            <person name="Asturias F.J."/>
            <person name="Kornberg R.D."/>
        </authorList>
    </citation>
    <scope>STRUCTURE BY ELECTRON MICROSCOPY (6.00 ANGSTROMS) OF 294-785</scope>
</reference>
<reference evidence="23" key="18">
    <citation type="journal article" date="2016" name="Cell">
        <title>Structure of a complete mediator-RNA polymerase II pre-initiation complex.</title>
        <authorList>
            <person name="Robinson P.J."/>
            <person name="Trnka M.J."/>
            <person name="Bushnell D.A."/>
            <person name="Davis R.E."/>
            <person name="Mattei P.J."/>
            <person name="Burlingame A.L."/>
            <person name="Kornberg R.D."/>
        </authorList>
    </citation>
    <scope>STRUCTURE BY ELECTRON MICROSCOPY (15.30 ANGSTROMS)</scope>
</reference>
<gene>
    <name evidence="17" type="primary">SSL2</name>
    <name type="synonym">LOM3</name>
    <name evidence="18" type="synonym">RAD25</name>
    <name type="synonym">UVS112</name>
    <name type="ordered locus">YIL143C</name>
</gene>
<evidence type="ECO:0000255" key="1"/>
<evidence type="ECO:0000255" key="2">
    <source>
        <dbReference type="PROSITE-ProRule" id="PRU00541"/>
    </source>
</evidence>
<evidence type="ECO:0000255" key="3">
    <source>
        <dbReference type="PROSITE-ProRule" id="PRU00542"/>
    </source>
</evidence>
<evidence type="ECO:0000256" key="4">
    <source>
        <dbReference type="SAM" id="MobiDB-lite"/>
    </source>
</evidence>
<evidence type="ECO:0000269" key="5">
    <source>
    </source>
</evidence>
<evidence type="ECO:0000269" key="6">
    <source>
    </source>
</evidence>
<evidence type="ECO:0000269" key="7">
    <source>
    </source>
</evidence>
<evidence type="ECO:0000269" key="8">
    <source>
    </source>
</evidence>
<evidence type="ECO:0000269" key="9">
    <source>
    </source>
</evidence>
<evidence type="ECO:0000269" key="10">
    <source>
    </source>
</evidence>
<evidence type="ECO:0000269" key="11">
    <source>
    </source>
</evidence>
<evidence type="ECO:0000269" key="12">
    <source>
    </source>
</evidence>
<evidence type="ECO:0000269" key="13">
    <source>
    </source>
</evidence>
<evidence type="ECO:0000269" key="14">
    <source>
    </source>
</evidence>
<evidence type="ECO:0000269" key="15">
    <source>
    </source>
</evidence>
<evidence type="ECO:0000269" key="16">
    <source>
    </source>
</evidence>
<evidence type="ECO:0000303" key="17">
    <source>
    </source>
</evidence>
<evidence type="ECO:0000303" key="18">
    <source>
    </source>
</evidence>
<evidence type="ECO:0000303" key="19">
    <source>
    </source>
</evidence>
<evidence type="ECO:0000305" key="20"/>
<evidence type="ECO:0000305" key="21">
    <source>
    </source>
</evidence>
<evidence type="ECO:0007744" key="22">
    <source>
        <dbReference type="PDB" id="5FMF"/>
    </source>
</evidence>
<evidence type="ECO:0007744" key="23">
    <source>
        <dbReference type="PDB" id="5SVA"/>
    </source>
</evidence>
<evidence type="ECO:0007744" key="24">
    <source>
    </source>
</evidence>
<evidence type="ECO:0007829" key="25">
    <source>
        <dbReference type="PDB" id="7ML0"/>
    </source>
</evidence>
<evidence type="ECO:0007829" key="26">
    <source>
        <dbReference type="PDB" id="7ML4"/>
    </source>
</evidence>
<evidence type="ECO:0007829" key="27">
    <source>
        <dbReference type="PDB" id="7O4J"/>
    </source>
</evidence>
<evidence type="ECO:0007829" key="28">
    <source>
        <dbReference type="PDB" id="7O4L"/>
    </source>
</evidence>
<evidence type="ECO:0007829" key="29">
    <source>
        <dbReference type="PDB" id="7ZS9"/>
    </source>
</evidence>
<protein>
    <recommendedName>
        <fullName evidence="19">General transcription and DNA repair factor IIH helicase/translocase subunit XPB/SSL2</fullName>
        <shortName>TFIIH subunit XPB/SSL2</shortName>
        <ecNumber evidence="20">5.6.2.4</ecNumber>
    </recommendedName>
    <alternativeName>
        <fullName evidence="20">DNA 3'-5' helicase/translocase XPB/SSL2</fullName>
    </alternativeName>
    <alternativeName>
        <fullName>DNA repair helicase RAD25/SSL2</fullName>
    </alternativeName>
    <alternativeName>
        <fullName>RNA polymerase II transcription factor B subunit SSL2</fullName>
        <shortName>TFB subunit SSL2</shortName>
    </alternativeName>
    <alternativeName>
        <fullName>Suppressor of stem-loop mutation 2</fullName>
    </alternativeName>
</protein>
<organism>
    <name type="scientific">Saccharomyces cerevisiae (strain ATCC 204508 / S288c)</name>
    <name type="common">Baker's yeast</name>
    <dbReference type="NCBI Taxonomy" id="559292"/>
    <lineage>
        <taxon>Eukaryota</taxon>
        <taxon>Fungi</taxon>
        <taxon>Dikarya</taxon>
        <taxon>Ascomycota</taxon>
        <taxon>Saccharomycotina</taxon>
        <taxon>Saccharomycetes</taxon>
        <taxon>Saccharomycetales</taxon>
        <taxon>Saccharomycetaceae</taxon>
        <taxon>Saccharomyces</taxon>
    </lineage>
</organism>
<comment type="function">
    <text evidence="7 10 11 12 13 14 15 16">ATP-dependent DNA translocase (PubMed:25775526). Component of the general transcription and DNA repair factor IIH (TFIIH) core complex. When complexed to CDK-activating kinase (CAK), involved in RNA transcription by RNA polymerase II (PubMed:14500720, PubMed:7693549, PubMed:7813015, PubMed:7961739, PubMed:8202161, PubMed:8269516, PubMed:8631896). May have 3'-5' helicase activity alone, the TFIIH core however has no 3'-5' helicase activity (PubMed:25775526). Also involved in transcription-coupled nucleotide excision repair (NER) of damaged DNA (PubMed:7693549, PubMed:7813015, PubMed:8202161, PubMed:8269516, PubMed:8631896). In NER, TFIIH acts by opening DNA around the lesion to allow the excision of the damaged oligonucleotide and its replacement by a new DNA fragment. The ATPase activity of XPB/SSL2, but not its helicase activity, is required for DNA opening. In transcription, TFIIH has an essential role in transcription initiation. When the pre-initiation complex (PIC) has been established, TFIIH is required for promoter opening and promoter escape. The ATP-dependent helicase activity of XPB/SSL2 is required for promoter opening and promoter escape. XPB/SSL2 acts as a double-stranded DNA translocase, promoting DNA opening by tracking in a 5'-3' dirction along the nontemplate promoter strand, rotating and inserting DNA into the Pol II active site cleft, leading to DNA unwinding (PubMed:25775526). A dsDNA-stimulated ATPase, dATP and ATP are equally good substrates (PubMed:25775526). May also use this translocase mechanism during DNA repair rather than physically wedging open damaged DNA (PubMed:25775526).</text>
</comment>
<comment type="catalytic activity">
    <reaction evidence="20">
        <text>Couples ATP hydrolysis with the unwinding of duplex DNA by translocating in the 3'-5' direction.</text>
        <dbReference type="EC" id="5.6.2.4"/>
    </reaction>
</comment>
<comment type="catalytic activity">
    <reaction evidence="10 14">
        <text>ATP + H2O = ADP + phosphate + H(+)</text>
        <dbReference type="Rhea" id="RHEA:13065"/>
        <dbReference type="ChEBI" id="CHEBI:15377"/>
        <dbReference type="ChEBI" id="CHEBI:15378"/>
        <dbReference type="ChEBI" id="CHEBI:30616"/>
        <dbReference type="ChEBI" id="CHEBI:43474"/>
        <dbReference type="ChEBI" id="CHEBI:456216"/>
        <dbReference type="EC" id="5.6.2.4"/>
    </reaction>
</comment>
<comment type="cofactor">
    <cofactor evidence="14">
        <name>Mg(2+)</name>
        <dbReference type="ChEBI" id="CHEBI:18420"/>
    </cofactor>
</comment>
<comment type="biophysicochemical properties">
    <kinetics>
        <KM evidence="10">1.4 uM for ATP hydrolysis by TFIIH in the absence of RAD3/XPD ATPase activity</KM>
        <text evidence="14">kcat for ssDNA-dependent ATPase activity is 140 min(-1) of purified protein.</text>
    </kinetics>
    <phDependence>
        <text evidence="14">Optimum pH is 7.25 for helicase and ATPase activities.</text>
    </phDependence>
</comment>
<comment type="subunit">
    <text evidence="7 9 10 12 13">Component of the 7-subunit TFIIH core complex composed of XPB/SSL2, XPD/RAD3, SSL1, TFB1, TFB2, TFB4 and TFB5, which is active in NER (PubMed:7813015). The core complex associates with the 3-subunit CTD-kinase module TFIIK composed of CCL1, KIN28 and TFB3 to form the 10-subunit holoenzyme (holo-TFIIH) active in transcription (PubMed:25775526, PubMed:7813015, PubMed:7961739). An additionnal subunit, TFB6, plays a role in the dissociation of the SSL2 helicase from TFIIH after transcription initiation (PubMed:22411836). Interacts directly with TFB6 (PubMed:22411836).</text>
</comment>
<comment type="subcellular location">
    <subcellularLocation>
        <location>Nucleus</location>
    </subcellularLocation>
</comment>
<comment type="disruption phenotype">
    <text evidence="6">Essential, it cannot be deleted; epistasis studies suggest it is involved in damaged DNA excision repair (PubMed:1333609).</text>
</comment>
<comment type="miscellaneous">
    <text evidence="8">Present with 825 molecules/cell in log phase SD medium.</text>
</comment>
<comment type="similarity">
    <text evidence="20">Belongs to the helicase family. RAD25/XPB subfamily.</text>
</comment>
<name>RAD25_YEAST</name>
<proteinExistence type="evidence at protein level"/>
<keyword id="KW-0002">3D-structure</keyword>
<keyword id="KW-0067">ATP-binding</keyword>
<keyword id="KW-0227">DNA damage</keyword>
<keyword id="KW-0234">DNA repair</keyword>
<keyword id="KW-0238">DNA-binding</keyword>
<keyword id="KW-0347">Helicase</keyword>
<keyword id="KW-0378">Hydrolase</keyword>
<keyword id="KW-0413">Isomerase</keyword>
<keyword id="KW-0547">Nucleotide-binding</keyword>
<keyword id="KW-0539">Nucleus</keyword>
<keyword id="KW-0597">Phosphoprotein</keyword>
<keyword id="KW-1185">Reference proteome</keyword>
<keyword id="KW-0804">Transcription</keyword>
<keyword id="KW-0805">Transcription regulation</keyword>
<sequence length="843" mass="95341">MTDVEGYQPKSKGKIFPDMGESFFSSDEDSPATDAEIDENYDDNRETSEGRGERDTGAMVTGLKKPRKKTKSSRHTAADSSMNQMDAKDKALLQDTNSDIPADFVPDSVSGMFRSHDFSYLRLRPDHASRPLWISPSDGRIILESFSPLAEQAQDFLVTIAEPISRPSHIHEYKITAYSLYAAVSVGLETDDIISVLDRLSKVPVAESIINFIKGATISYGKVKLVIKHNRYFVETTQADILQMLLNDSVIGPLRIDSDHQVQPPEDVLQQQLQQTAGKPATNVNPNDVEAVFSAVIGGDNEREEEDDDIDAVHSFEIANESVEVVKKRCQEIDYPVLEEYDFRNDHRNPDLDIDLKPSTQIRPYQEKSLSKMFGNGRARSGIIVLPCGAGKTLVGITAACTIKKSVIVLCTSSVSVMQWRQQFLQWCTLQPENCAVFTSDNKEMFQTESGLVVSTYSMVANTRNRSHDSQKVMDFLTGREWGFIILDEVHVVPAAMFRRVVSTIAAHAKLGLTATLVREDDKIGDLNFLIGPKLYEANWMELSQKGHIANVQCAEVWCPMTAEFYQEYLRETARKRMLLYIMNPTKFQACQFLIQYHERRGDKIIVFSDNVYALQEYALKMGKPFIYGSTPQQERMNILQNFQYNDQINTIFLSKVGDTSIDLPEATCLIQISSHYGSRRQEAQRLGRILRAKRRNDEGFNAFFYSLVSKDTQEMYYSTKRQAFLVDQGYAFKVITHLHGMENIPNLAYASPRERRELLQEVLLKNEEAAGIEVGDDADNSVGRGSNGHKRFKSKAVRGEGSLSGLAGGEDMAYMEYSTNKNKELKEHHPLIRKMYYKNLKK</sequence>
<accession>Q00578</accession>
<accession>D6VVE4</accession>
<dbReference type="EC" id="5.6.2.4" evidence="20"/>
<dbReference type="EMBL" id="Z38059">
    <property type="protein sequence ID" value="CAA86135.1"/>
    <property type="molecule type" value="Genomic_DNA"/>
</dbReference>
<dbReference type="EMBL" id="M94176">
    <property type="protein sequence ID" value="AAA35102.1"/>
    <property type="molecule type" value="Genomic_DNA"/>
</dbReference>
<dbReference type="EMBL" id="L01414">
    <property type="protein sequence ID" value="AAA34942.1"/>
    <property type="molecule type" value="Genomic_DNA"/>
</dbReference>
<dbReference type="EMBL" id="AY692883">
    <property type="protein sequence ID" value="AAT92902.1"/>
    <property type="molecule type" value="Genomic_DNA"/>
</dbReference>
<dbReference type="EMBL" id="BK006942">
    <property type="protein sequence ID" value="DAA08410.1"/>
    <property type="molecule type" value="Genomic_DNA"/>
</dbReference>
<dbReference type="PIR" id="S31272">
    <property type="entry name" value="S31272"/>
</dbReference>
<dbReference type="RefSeq" id="NP_012123.1">
    <property type="nucleotide sequence ID" value="NM_001179491.1"/>
</dbReference>
<dbReference type="PDB" id="5FMF">
    <property type="method" value="EM"/>
    <property type="resolution" value="6.00 A"/>
    <property type="chains" value="1=294-785"/>
</dbReference>
<dbReference type="PDB" id="5OQJ">
    <property type="method" value="EM"/>
    <property type="resolution" value="4.70 A"/>
    <property type="chains" value="7=1-843"/>
</dbReference>
<dbReference type="PDB" id="5OQM">
    <property type="method" value="EM"/>
    <property type="resolution" value="5.80 A"/>
    <property type="chains" value="7=1-843"/>
</dbReference>
<dbReference type="PDB" id="5SVA">
    <property type="method" value="EM"/>
    <property type="resolution" value="15.30 A"/>
    <property type="chains" value="Z=1-843"/>
</dbReference>
<dbReference type="PDB" id="6GYM">
    <property type="method" value="EM"/>
    <property type="resolution" value="6.70 A"/>
    <property type="chains" value="7=1-843"/>
</dbReference>
<dbReference type="PDB" id="7K01">
    <property type="method" value="EM"/>
    <property type="resolution" value="3.90 A"/>
    <property type="chains" value="7=1-843"/>
</dbReference>
<dbReference type="PDB" id="7K04">
    <property type="method" value="EM"/>
    <property type="resolution" value="9.25 A"/>
    <property type="chains" value="7=1-843"/>
</dbReference>
<dbReference type="PDB" id="7M2U">
    <property type="method" value="EM"/>
    <property type="resolution" value="8.20 A"/>
    <property type="chains" value="7=1-843"/>
</dbReference>
<dbReference type="PDB" id="7ML0">
    <property type="method" value="EM"/>
    <property type="resolution" value="3.00 A"/>
    <property type="chains" value="7=1-843"/>
</dbReference>
<dbReference type="PDB" id="7ML1">
    <property type="method" value="EM"/>
    <property type="resolution" value="4.00 A"/>
    <property type="chains" value="7=1-843"/>
</dbReference>
<dbReference type="PDB" id="7ML2">
    <property type="method" value="EM"/>
    <property type="resolution" value="3.40 A"/>
    <property type="chains" value="7=1-843"/>
</dbReference>
<dbReference type="PDB" id="7ML3">
    <property type="method" value="EM"/>
    <property type="resolution" value="7.60 A"/>
    <property type="chains" value="7=1-843"/>
</dbReference>
<dbReference type="PDB" id="7ML4">
    <property type="method" value="EM"/>
    <property type="resolution" value="3.10 A"/>
    <property type="chains" value="7=1-843"/>
</dbReference>
<dbReference type="PDB" id="7O4I">
    <property type="method" value="EM"/>
    <property type="resolution" value="3.20 A"/>
    <property type="chains" value="7=1-843"/>
</dbReference>
<dbReference type="PDB" id="7O4J">
    <property type="method" value="EM"/>
    <property type="resolution" value="2.90 A"/>
    <property type="chains" value="7=1-843"/>
</dbReference>
<dbReference type="PDB" id="7O4K">
    <property type="method" value="EM"/>
    <property type="resolution" value="3.60 A"/>
    <property type="chains" value="7=1-843"/>
</dbReference>
<dbReference type="PDB" id="7O4L">
    <property type="method" value="EM"/>
    <property type="resolution" value="3.40 A"/>
    <property type="chains" value="7=1-843"/>
</dbReference>
<dbReference type="PDB" id="7O72">
    <property type="method" value="EM"/>
    <property type="resolution" value="3.40 A"/>
    <property type="chains" value="7=1-843"/>
</dbReference>
<dbReference type="PDB" id="7O73">
    <property type="method" value="EM"/>
    <property type="resolution" value="3.40 A"/>
    <property type="chains" value="7=1-843"/>
</dbReference>
<dbReference type="PDB" id="7O75">
    <property type="method" value="EM"/>
    <property type="resolution" value="3.20 A"/>
    <property type="chains" value="7=1-843"/>
</dbReference>
<dbReference type="PDB" id="7ZS9">
    <property type="method" value="EM"/>
    <property type="resolution" value="3.10 A"/>
    <property type="chains" value="7=1-843"/>
</dbReference>
<dbReference type="PDB" id="7ZSA">
    <property type="method" value="EM"/>
    <property type="resolution" value="4.00 A"/>
    <property type="chains" value="7=1-843"/>
</dbReference>
<dbReference type="PDB" id="7ZSB">
    <property type="method" value="EM"/>
    <property type="resolution" value="6.60 A"/>
    <property type="chains" value="7=1-843"/>
</dbReference>
<dbReference type="PDB" id="8CEN">
    <property type="method" value="EM"/>
    <property type="resolution" value="3.00 A"/>
    <property type="chains" value="7=1-843"/>
</dbReference>
<dbReference type="PDB" id="8CEO">
    <property type="method" value="EM"/>
    <property type="resolution" value="3.60 A"/>
    <property type="chains" value="7=1-843"/>
</dbReference>
<dbReference type="PDB" id="8UMH">
    <property type="method" value="EM"/>
    <property type="resolution" value="4.10 A"/>
    <property type="chains" value="7=1-843"/>
</dbReference>
<dbReference type="PDB" id="8UMI">
    <property type="method" value="EM"/>
    <property type="resolution" value="3.70 A"/>
    <property type="chains" value="7=1-843"/>
</dbReference>
<dbReference type="PDB" id="8UOQ">
    <property type="method" value="EM"/>
    <property type="resolution" value="3.80 A"/>
    <property type="chains" value="7=1-843"/>
</dbReference>
<dbReference type="PDB" id="8UOT">
    <property type="method" value="EM"/>
    <property type="resolution" value="3.70 A"/>
    <property type="chains" value="7=1-843"/>
</dbReference>
<dbReference type="PDBsum" id="5FMF"/>
<dbReference type="PDBsum" id="5OQJ"/>
<dbReference type="PDBsum" id="5OQM"/>
<dbReference type="PDBsum" id="5SVA"/>
<dbReference type="PDBsum" id="6GYM"/>
<dbReference type="PDBsum" id="7K01"/>
<dbReference type="PDBsum" id="7K04"/>
<dbReference type="PDBsum" id="7M2U"/>
<dbReference type="PDBsum" id="7ML0"/>
<dbReference type="PDBsum" id="7ML1"/>
<dbReference type="PDBsum" id="7ML2"/>
<dbReference type="PDBsum" id="7ML3"/>
<dbReference type="PDBsum" id="7ML4"/>
<dbReference type="PDBsum" id="7O4I"/>
<dbReference type="PDBsum" id="7O4J"/>
<dbReference type="PDBsum" id="7O4K"/>
<dbReference type="PDBsum" id="7O4L"/>
<dbReference type="PDBsum" id="7O72"/>
<dbReference type="PDBsum" id="7O73"/>
<dbReference type="PDBsum" id="7O75"/>
<dbReference type="PDBsum" id="7ZS9"/>
<dbReference type="PDBsum" id="7ZSA"/>
<dbReference type="PDBsum" id="7ZSB"/>
<dbReference type="PDBsum" id="8CEN"/>
<dbReference type="PDBsum" id="8CEO"/>
<dbReference type="PDBsum" id="8UMH"/>
<dbReference type="PDBsum" id="8UMI"/>
<dbReference type="PDBsum" id="8UOQ"/>
<dbReference type="PDBsum" id="8UOT"/>
<dbReference type="EMDB" id="EMD-0092"/>
<dbReference type="EMDB" id="EMD-12719"/>
<dbReference type="EMDB" id="EMD-12720"/>
<dbReference type="EMDB" id="EMD-12721"/>
<dbReference type="EMDB" id="EMD-12722"/>
<dbReference type="EMDB" id="EMD-12743"/>
<dbReference type="EMDB" id="EMD-12744"/>
<dbReference type="EMDB" id="EMD-12745"/>
<dbReference type="EMDB" id="EMD-14927"/>
<dbReference type="EMDB" id="EMD-14928"/>
<dbReference type="EMDB" id="EMD-14929"/>
<dbReference type="EMDB" id="EMD-16610"/>
<dbReference type="EMDB" id="EMD-16611"/>
<dbReference type="EMDB" id="EMD-22587"/>
<dbReference type="EMDB" id="EMD-22588"/>
<dbReference type="EMDB" id="EMD-23904"/>
<dbReference type="EMDB" id="EMD-23905"/>
<dbReference type="EMDB" id="EMD-23906"/>
<dbReference type="EMDB" id="EMD-23907"/>
<dbReference type="EMDB" id="EMD-23908"/>
<dbReference type="EMDB" id="EMD-3846"/>
<dbReference type="EMDB" id="EMD-3850"/>
<dbReference type="EMDB" id="EMD-42379"/>
<dbReference type="EMDB" id="EMD-42380"/>
<dbReference type="EMDB" id="EMD-42437"/>
<dbReference type="EMDB" id="EMD-42438"/>
<dbReference type="EMDB" id="EMD-8305"/>
<dbReference type="SMR" id="Q00578"/>
<dbReference type="BioGRID" id="34849">
    <property type="interactions" value="140"/>
</dbReference>
<dbReference type="ComplexPortal" id="CPX-1659">
    <property type="entry name" value="General transcription factor TFIIH complex"/>
</dbReference>
<dbReference type="DIP" id="DIP-731N"/>
<dbReference type="FunCoup" id="Q00578">
    <property type="interactions" value="1173"/>
</dbReference>
<dbReference type="IntAct" id="Q00578">
    <property type="interactions" value="28"/>
</dbReference>
<dbReference type="MINT" id="Q00578"/>
<dbReference type="STRING" id="4932.YIL143C"/>
<dbReference type="iPTMnet" id="Q00578"/>
<dbReference type="PaxDb" id="4932-YIL143C"/>
<dbReference type="PeptideAtlas" id="Q00578"/>
<dbReference type="TopDownProteomics" id="Q00578"/>
<dbReference type="EnsemblFungi" id="YIL143C_mRNA">
    <property type="protein sequence ID" value="YIL143C"/>
    <property type="gene ID" value="YIL143C"/>
</dbReference>
<dbReference type="GeneID" id="854663"/>
<dbReference type="KEGG" id="sce:YIL143C"/>
<dbReference type="AGR" id="SGD:S000001405"/>
<dbReference type="SGD" id="S000001405">
    <property type="gene designation" value="SSL2"/>
</dbReference>
<dbReference type="VEuPathDB" id="FungiDB:YIL143C"/>
<dbReference type="eggNOG" id="KOG1123">
    <property type="taxonomic scope" value="Eukaryota"/>
</dbReference>
<dbReference type="GeneTree" id="ENSGT00390000002204"/>
<dbReference type="HOGENOM" id="CLU_008213_0_0_1"/>
<dbReference type="InParanoid" id="Q00578"/>
<dbReference type="OMA" id="RCQEIDY"/>
<dbReference type="OrthoDB" id="10262986at2759"/>
<dbReference type="BioCyc" id="YEAST:G3O-31393-MONOMER"/>
<dbReference type="Reactome" id="R-SCE-113418">
    <property type="pathway name" value="Formation of the Early Elongation Complex"/>
</dbReference>
<dbReference type="Reactome" id="R-SCE-674695">
    <property type="pathway name" value="RNA Polymerase II Pre-transcription Events"/>
</dbReference>
<dbReference type="Reactome" id="R-SCE-6781823">
    <property type="pathway name" value="Formation of TC-NER Pre-Incision Complex"/>
</dbReference>
<dbReference type="Reactome" id="R-SCE-6782135">
    <property type="pathway name" value="Dual incision in TC-NER"/>
</dbReference>
<dbReference type="Reactome" id="R-SCE-6782210">
    <property type="pathway name" value="Gap-filling DNA repair synthesis and ligation in TC-NER"/>
</dbReference>
<dbReference type="Reactome" id="R-SCE-6796648">
    <property type="pathway name" value="TP53 Regulates Transcription of DNA Repair Genes"/>
</dbReference>
<dbReference type="Reactome" id="R-SCE-72086">
    <property type="pathway name" value="mRNA Capping"/>
</dbReference>
<dbReference type="Reactome" id="R-SCE-73772">
    <property type="pathway name" value="RNA Polymerase I Promoter Escape"/>
</dbReference>
<dbReference type="Reactome" id="R-SCE-73776">
    <property type="pathway name" value="RNA Polymerase II Promoter Escape"/>
</dbReference>
<dbReference type="Reactome" id="R-SCE-73779">
    <property type="pathway name" value="RNA Polymerase II Transcription Pre-Initiation And Promoter Opening"/>
</dbReference>
<dbReference type="Reactome" id="R-SCE-75953">
    <property type="pathway name" value="RNA Polymerase II Transcription Initiation"/>
</dbReference>
<dbReference type="Reactome" id="R-SCE-76042">
    <property type="pathway name" value="RNA Polymerase II Transcription Initiation And Promoter Clearance"/>
</dbReference>
<dbReference type="Reactome" id="R-SCE-77075">
    <property type="pathway name" value="RNA Pol II CTD phosphorylation and interaction with CE"/>
</dbReference>
<dbReference type="BioGRID-ORCS" id="854663">
    <property type="hits" value="7 hits in 10 CRISPR screens"/>
</dbReference>
<dbReference type="PRO" id="PR:Q00578"/>
<dbReference type="Proteomes" id="UP000002311">
    <property type="component" value="Chromosome IX"/>
</dbReference>
<dbReference type="RNAct" id="Q00578">
    <property type="molecule type" value="protein"/>
</dbReference>
<dbReference type="GO" id="GO:0005829">
    <property type="term" value="C:cytosol"/>
    <property type="evidence" value="ECO:0000314"/>
    <property type="project" value="SGD"/>
</dbReference>
<dbReference type="GO" id="GO:0000112">
    <property type="term" value="C:nucleotide-excision repair factor 3 complex"/>
    <property type="evidence" value="ECO:0000314"/>
    <property type="project" value="SGD"/>
</dbReference>
<dbReference type="GO" id="GO:0005634">
    <property type="term" value="C:nucleus"/>
    <property type="evidence" value="ECO:0000314"/>
    <property type="project" value="SGD"/>
</dbReference>
<dbReference type="GO" id="GO:0000439">
    <property type="term" value="C:transcription factor TFIIH core complex"/>
    <property type="evidence" value="ECO:0000314"/>
    <property type="project" value="SGD"/>
</dbReference>
<dbReference type="GO" id="GO:0005675">
    <property type="term" value="C:transcription factor TFIIH holo complex"/>
    <property type="evidence" value="ECO:0000314"/>
    <property type="project" value="SGD"/>
</dbReference>
<dbReference type="GO" id="GO:0097550">
    <property type="term" value="C:transcription preinitiation complex"/>
    <property type="evidence" value="ECO:0000314"/>
    <property type="project" value="SGD"/>
</dbReference>
<dbReference type="GO" id="GO:0043138">
    <property type="term" value="F:3'-5' DNA helicase activity"/>
    <property type="evidence" value="ECO:0000318"/>
    <property type="project" value="GO_Central"/>
</dbReference>
<dbReference type="GO" id="GO:0005524">
    <property type="term" value="F:ATP binding"/>
    <property type="evidence" value="ECO:0007669"/>
    <property type="project" value="UniProtKB-KW"/>
</dbReference>
<dbReference type="GO" id="GO:0016887">
    <property type="term" value="F:ATP hydrolysis activity"/>
    <property type="evidence" value="ECO:0007669"/>
    <property type="project" value="RHEA"/>
</dbReference>
<dbReference type="GO" id="GO:0003677">
    <property type="term" value="F:DNA binding"/>
    <property type="evidence" value="ECO:0007669"/>
    <property type="project" value="UniProtKB-KW"/>
</dbReference>
<dbReference type="GO" id="GO:0003678">
    <property type="term" value="F:DNA helicase activity"/>
    <property type="evidence" value="ECO:0000314"/>
    <property type="project" value="SGD"/>
</dbReference>
<dbReference type="GO" id="GO:0015616">
    <property type="term" value="F:DNA translocase activity"/>
    <property type="evidence" value="ECO:0000315"/>
    <property type="project" value="SGD"/>
</dbReference>
<dbReference type="GO" id="GO:0006289">
    <property type="term" value="P:nucleotide-excision repair"/>
    <property type="evidence" value="ECO:0000314"/>
    <property type="project" value="ComplexPortal"/>
</dbReference>
<dbReference type="GO" id="GO:0016973">
    <property type="term" value="P:poly(A)+ mRNA export from nucleus"/>
    <property type="evidence" value="ECO:0000315"/>
    <property type="project" value="SGD"/>
</dbReference>
<dbReference type="GO" id="GO:0000019">
    <property type="term" value="P:regulation of mitotic recombination"/>
    <property type="evidence" value="ECO:0000315"/>
    <property type="project" value="SGD"/>
</dbReference>
<dbReference type="GO" id="GO:0001111">
    <property type="term" value="P:RNA polymerase II promoter clearance"/>
    <property type="evidence" value="ECO:0000315"/>
    <property type="project" value="SGD"/>
</dbReference>
<dbReference type="GO" id="GO:0006366">
    <property type="term" value="P:transcription by RNA polymerase II"/>
    <property type="evidence" value="ECO:0000314"/>
    <property type="project" value="SGD"/>
</dbReference>
<dbReference type="GO" id="GO:0006367">
    <property type="term" value="P:transcription initiation at RNA polymerase II promoter"/>
    <property type="evidence" value="ECO:0000314"/>
    <property type="project" value="ComplexPortal"/>
</dbReference>
<dbReference type="GO" id="GO:0001113">
    <property type="term" value="P:transcription open complex formation at RNA polymerase II promoter"/>
    <property type="evidence" value="ECO:0000315"/>
    <property type="project" value="SGD"/>
</dbReference>
<dbReference type="GO" id="GO:0001174">
    <property type="term" value="P:transcriptional start site selection at RNA polymerase II promoter"/>
    <property type="evidence" value="ECO:0000315"/>
    <property type="project" value="SGD"/>
</dbReference>
<dbReference type="CDD" id="cd18029">
    <property type="entry name" value="DEXHc_XPB"/>
    <property type="match status" value="1"/>
</dbReference>
<dbReference type="CDD" id="cd18789">
    <property type="entry name" value="SF2_C_XPB"/>
    <property type="match status" value="1"/>
</dbReference>
<dbReference type="FunFam" id="3.40.50.300:FF:000077">
    <property type="entry name" value="Probable DNA repair helicase RAD25"/>
    <property type="match status" value="1"/>
</dbReference>
<dbReference type="FunFam" id="3.40.50.300:FF:000117">
    <property type="entry name" value="Putative DNA repair helicase rad25"/>
    <property type="match status" value="1"/>
</dbReference>
<dbReference type="Gene3D" id="3.40.50.300">
    <property type="entry name" value="P-loop containing nucleotide triphosphate hydrolases"/>
    <property type="match status" value="2"/>
</dbReference>
<dbReference type="InterPro" id="IPR050615">
    <property type="entry name" value="ATP-dep_DNA_Helicase"/>
</dbReference>
<dbReference type="InterPro" id="IPR032438">
    <property type="entry name" value="ERCC3_RAD25_C"/>
</dbReference>
<dbReference type="InterPro" id="IPR006935">
    <property type="entry name" value="Helicase/UvrB_N"/>
</dbReference>
<dbReference type="InterPro" id="IPR014001">
    <property type="entry name" value="Helicase_ATP-bd"/>
</dbReference>
<dbReference type="InterPro" id="IPR001650">
    <property type="entry name" value="Helicase_C-like"/>
</dbReference>
<dbReference type="InterPro" id="IPR027417">
    <property type="entry name" value="P-loop_NTPase"/>
</dbReference>
<dbReference type="InterPro" id="IPR001161">
    <property type="entry name" value="XPB/Ssl2"/>
</dbReference>
<dbReference type="InterPro" id="IPR032830">
    <property type="entry name" value="XPB/Ssl2_N"/>
</dbReference>
<dbReference type="NCBIfam" id="TIGR00603">
    <property type="entry name" value="rad25"/>
    <property type="match status" value="1"/>
</dbReference>
<dbReference type="PANTHER" id="PTHR11274:SF0">
    <property type="entry name" value="GENERAL TRANSCRIPTION AND DNA REPAIR FACTOR IIH HELICASE SUBUNIT XPB"/>
    <property type="match status" value="1"/>
</dbReference>
<dbReference type="PANTHER" id="PTHR11274">
    <property type="entry name" value="RAD25/XP-B DNA REPAIR HELICASE"/>
    <property type="match status" value="1"/>
</dbReference>
<dbReference type="Pfam" id="PF16203">
    <property type="entry name" value="ERCC3_RAD25_C"/>
    <property type="match status" value="1"/>
</dbReference>
<dbReference type="Pfam" id="PF13625">
    <property type="entry name" value="Helicase_C_3"/>
    <property type="match status" value="1"/>
</dbReference>
<dbReference type="Pfam" id="PF04851">
    <property type="entry name" value="ResIII"/>
    <property type="match status" value="1"/>
</dbReference>
<dbReference type="PRINTS" id="PR00851">
    <property type="entry name" value="XRODRMPGMNTB"/>
</dbReference>
<dbReference type="SMART" id="SM00487">
    <property type="entry name" value="DEXDc"/>
    <property type="match status" value="1"/>
</dbReference>
<dbReference type="SMART" id="SM00490">
    <property type="entry name" value="HELICc"/>
    <property type="match status" value="1"/>
</dbReference>
<dbReference type="SUPFAM" id="SSF52540">
    <property type="entry name" value="P-loop containing nucleoside triphosphate hydrolases"/>
    <property type="match status" value="2"/>
</dbReference>
<dbReference type="PROSITE" id="PS51192">
    <property type="entry name" value="HELICASE_ATP_BIND_1"/>
    <property type="match status" value="1"/>
</dbReference>
<dbReference type="PROSITE" id="PS51194">
    <property type="entry name" value="HELICASE_CTER"/>
    <property type="match status" value="1"/>
</dbReference>
<feature type="chain" id="PRO_0000101994" description="General transcription and DNA repair factor IIH helicase/translocase subunit XPB/SSL2">
    <location>
        <begin position="1"/>
        <end position="843"/>
    </location>
</feature>
<feature type="domain" description="Helicase ATP-binding" evidence="2">
    <location>
        <begin position="373"/>
        <end position="535"/>
    </location>
</feature>
<feature type="domain" description="Helicase C-terminal" evidence="3">
    <location>
        <begin position="589"/>
        <end position="743"/>
    </location>
</feature>
<feature type="region of interest" description="Disordered" evidence="4">
    <location>
        <begin position="1"/>
        <end position="85"/>
    </location>
</feature>
<feature type="short sequence motif" description="Nuclear localization signal" evidence="1">
    <location>
        <begin position="64"/>
        <end position="75"/>
    </location>
</feature>
<feature type="short sequence motif" description="DEAH box" evidence="2">
    <location>
        <begin position="488"/>
        <end position="491"/>
    </location>
</feature>
<feature type="compositionally biased region" description="Acidic residues" evidence="4">
    <location>
        <begin position="26"/>
        <end position="41"/>
    </location>
</feature>
<feature type="compositionally biased region" description="Basic and acidic residues" evidence="4">
    <location>
        <begin position="42"/>
        <end position="56"/>
    </location>
</feature>
<feature type="compositionally biased region" description="Basic residues" evidence="4">
    <location>
        <begin position="64"/>
        <end position="74"/>
    </location>
</feature>
<feature type="binding site" evidence="2">
    <location>
        <begin position="386"/>
        <end position="393"/>
    </location>
    <ligand>
        <name>ATP</name>
        <dbReference type="ChEBI" id="CHEBI:30616"/>
    </ligand>
</feature>
<feature type="modified residue" description="Phosphoserine" evidence="24">
    <location>
        <position position="752"/>
    </location>
</feature>
<feature type="sequence variant" description="In suppressor mutant." evidence="5">
    <original>W</original>
    <variation>L</variation>
    <location>
        <position position="427"/>
    </location>
</feature>
<feature type="mutagenesis site" description="Lethal in vivo. Defective in translation in vitro." evidence="6 14">
    <original>K</original>
    <variation>R</variation>
    <location>
        <position position="392"/>
    </location>
</feature>
<feature type="mutagenesis site" description="Loss of DNA translocase function of TFHII." evidence="10">
    <original>E</original>
    <variation>Q</variation>
    <location>
        <position position="489"/>
    </location>
</feature>
<feature type="mutagenesis site" description="Increased UV sensitivity." evidence="6">
    <location>
        <begin position="798"/>
        <end position="843"/>
    </location>
</feature>
<feature type="sequence conflict" description="In Ref. 2; AAA34942." evidence="21" ref="2">
    <original>P</original>
    <variation>S</variation>
    <location>
        <position position="9"/>
    </location>
</feature>
<feature type="sequence conflict" description="In Ref. 2; AAA34942." evidence="21" ref="2">
    <original>S</original>
    <variation>L</variation>
    <location>
        <position position="48"/>
    </location>
</feature>
<feature type="strand" evidence="25">
    <location>
        <begin position="103"/>
        <end position="105"/>
    </location>
</feature>
<feature type="helix" evidence="27">
    <location>
        <begin position="110"/>
        <end position="112"/>
    </location>
</feature>
<feature type="strand" evidence="27">
    <location>
        <begin position="113"/>
        <end position="115"/>
    </location>
</feature>
<feature type="strand" evidence="26">
    <location>
        <begin position="118"/>
        <end position="121"/>
    </location>
</feature>
<feature type="turn" evidence="27">
    <location>
        <begin position="125"/>
        <end position="129"/>
    </location>
</feature>
<feature type="strand" evidence="27">
    <location>
        <begin position="132"/>
        <end position="134"/>
    </location>
</feature>
<feature type="turn" evidence="27">
    <location>
        <begin position="136"/>
        <end position="138"/>
    </location>
</feature>
<feature type="strand" evidence="27">
    <location>
        <begin position="140"/>
        <end position="144"/>
    </location>
</feature>
<feature type="strand" evidence="28">
    <location>
        <begin position="147"/>
        <end position="149"/>
    </location>
</feature>
<feature type="helix" evidence="27">
    <location>
        <begin position="150"/>
        <end position="160"/>
    </location>
</feature>
<feature type="strand" evidence="27">
    <location>
        <begin position="161"/>
        <end position="165"/>
    </location>
</feature>
<feature type="strand" evidence="27">
    <location>
        <begin position="168"/>
        <end position="174"/>
    </location>
</feature>
<feature type="helix" evidence="27">
    <location>
        <begin position="177"/>
        <end position="183"/>
    </location>
</feature>
<feature type="turn" evidence="27">
    <location>
        <begin position="184"/>
        <end position="187"/>
    </location>
</feature>
<feature type="helix" evidence="27">
    <location>
        <begin position="190"/>
        <end position="200"/>
    </location>
</feature>
<feature type="strand" evidence="27">
    <location>
        <begin position="201"/>
        <end position="203"/>
    </location>
</feature>
<feature type="helix" evidence="27">
    <location>
        <begin position="207"/>
        <end position="216"/>
    </location>
</feature>
<feature type="turn" evidence="26">
    <location>
        <begin position="218"/>
        <end position="221"/>
    </location>
</feature>
<feature type="strand" evidence="27">
    <location>
        <begin position="224"/>
        <end position="228"/>
    </location>
</feature>
<feature type="strand" evidence="27">
    <location>
        <begin position="231"/>
        <end position="235"/>
    </location>
</feature>
<feature type="strand" evidence="27">
    <location>
        <begin position="237"/>
        <end position="239"/>
    </location>
</feature>
<feature type="helix" evidence="27">
    <location>
        <begin position="242"/>
        <end position="245"/>
    </location>
</feature>
<feature type="strand" evidence="25">
    <location>
        <begin position="249"/>
        <end position="252"/>
    </location>
</feature>
<feature type="strand" evidence="26">
    <location>
        <begin position="257"/>
        <end position="259"/>
    </location>
</feature>
<feature type="strand" evidence="25">
    <location>
        <begin position="262"/>
        <end position="267"/>
    </location>
</feature>
<feature type="helix" evidence="25">
    <location>
        <begin position="305"/>
        <end position="307"/>
    </location>
</feature>
<feature type="strand" evidence="26">
    <location>
        <begin position="312"/>
        <end position="314"/>
    </location>
</feature>
<feature type="strand" evidence="27">
    <location>
        <begin position="315"/>
        <end position="318"/>
    </location>
</feature>
<feature type="helix" evidence="27">
    <location>
        <begin position="323"/>
        <end position="332"/>
    </location>
</feature>
<feature type="strand" evidence="28">
    <location>
        <begin position="333"/>
        <end position="335"/>
    </location>
</feature>
<feature type="helix" evidence="27">
    <location>
        <begin position="343"/>
        <end position="345"/>
    </location>
</feature>
<feature type="strand" evidence="26">
    <location>
        <begin position="347"/>
        <end position="349"/>
    </location>
</feature>
<feature type="helix" evidence="27">
    <location>
        <begin position="364"/>
        <end position="374"/>
    </location>
</feature>
<feature type="strand" evidence="27">
    <location>
        <begin position="375"/>
        <end position="380"/>
    </location>
</feature>
<feature type="strand" evidence="27">
    <location>
        <begin position="382"/>
        <end position="385"/>
    </location>
</feature>
<feature type="helix" evidence="27">
    <location>
        <begin position="392"/>
        <end position="403"/>
    </location>
</feature>
<feature type="strand" evidence="27">
    <location>
        <begin position="407"/>
        <end position="410"/>
    </location>
</feature>
<feature type="helix" evidence="27">
    <location>
        <begin position="414"/>
        <end position="427"/>
    </location>
</feature>
<feature type="strand" evidence="26">
    <location>
        <begin position="428"/>
        <end position="430"/>
    </location>
</feature>
<feature type="helix" evidence="27">
    <location>
        <begin position="432"/>
        <end position="434"/>
    </location>
</feature>
<feature type="strand" evidence="27">
    <location>
        <begin position="435"/>
        <end position="441"/>
    </location>
</feature>
<feature type="strand" evidence="27">
    <location>
        <begin position="448"/>
        <end position="450"/>
    </location>
</feature>
<feature type="strand" evidence="27">
    <location>
        <begin position="452"/>
        <end position="455"/>
    </location>
</feature>
<feature type="helix" evidence="27">
    <location>
        <begin position="457"/>
        <end position="460"/>
    </location>
</feature>
<feature type="strand" evidence="25">
    <location>
        <begin position="461"/>
        <end position="463"/>
    </location>
</feature>
<feature type="helix" evidence="27">
    <location>
        <begin position="468"/>
        <end position="479"/>
    </location>
</feature>
<feature type="strand" evidence="27">
    <location>
        <begin position="482"/>
        <end position="489"/>
    </location>
</feature>
<feature type="helix" evidence="27">
    <location>
        <begin position="490"/>
        <end position="492"/>
    </location>
</feature>
<feature type="turn" evidence="27">
    <location>
        <begin position="496"/>
        <end position="498"/>
    </location>
</feature>
<feature type="helix" evidence="27">
    <location>
        <begin position="499"/>
        <end position="504"/>
    </location>
</feature>
<feature type="strand" evidence="27">
    <location>
        <begin position="510"/>
        <end position="515"/>
    </location>
</feature>
<feature type="strand" evidence="27">
    <location>
        <begin position="520"/>
        <end position="522"/>
    </location>
</feature>
<feature type="helix" evidence="27">
    <location>
        <begin position="523"/>
        <end position="526"/>
    </location>
</feature>
<feature type="helix" evidence="27">
    <location>
        <begin position="527"/>
        <end position="530"/>
    </location>
</feature>
<feature type="strand" evidence="27">
    <location>
        <begin position="534"/>
        <end position="537"/>
    </location>
</feature>
<feature type="helix" evidence="27">
    <location>
        <begin position="540"/>
        <end position="545"/>
    </location>
</feature>
<feature type="strand" evidence="26">
    <location>
        <begin position="546"/>
        <end position="549"/>
    </location>
</feature>
<feature type="strand" evidence="27">
    <location>
        <begin position="552"/>
        <end position="560"/>
    </location>
</feature>
<feature type="helix" evidence="27">
    <location>
        <begin position="563"/>
        <end position="571"/>
    </location>
</feature>
<feature type="helix" evidence="27">
    <location>
        <begin position="574"/>
        <end position="582"/>
    </location>
</feature>
<feature type="helix" evidence="27">
    <location>
        <begin position="585"/>
        <end position="600"/>
    </location>
</feature>
<feature type="strand" evidence="27">
    <location>
        <begin position="605"/>
        <end position="608"/>
    </location>
</feature>
<feature type="helix" evidence="27">
    <location>
        <begin position="612"/>
        <end position="622"/>
    </location>
</feature>
<feature type="helix" evidence="27">
    <location>
        <begin position="633"/>
        <end position="645"/>
    </location>
</feature>
<feature type="strand" evidence="25">
    <location>
        <begin position="647"/>
        <end position="649"/>
    </location>
</feature>
<feature type="strand" evidence="27">
    <location>
        <begin position="651"/>
        <end position="653"/>
    </location>
</feature>
<feature type="helix" evidence="27">
    <location>
        <begin position="656"/>
        <end position="659"/>
    </location>
</feature>
<feature type="strand" evidence="27">
    <location>
        <begin position="669"/>
        <end position="673"/>
    </location>
</feature>
<feature type="turn" evidence="25">
    <location>
        <begin position="677"/>
        <end position="679"/>
    </location>
</feature>
<feature type="helix" evidence="27">
    <location>
        <begin position="680"/>
        <end position="688"/>
    </location>
</feature>
<feature type="turn" evidence="27">
    <location>
        <begin position="689"/>
        <end position="692"/>
    </location>
</feature>
<feature type="helix" evidence="29">
    <location>
        <begin position="694"/>
        <end position="697"/>
    </location>
</feature>
<feature type="strand" evidence="26">
    <location>
        <begin position="698"/>
        <end position="700"/>
    </location>
</feature>
<feature type="strand" evidence="27">
    <location>
        <begin position="703"/>
        <end position="711"/>
    </location>
</feature>
<feature type="helix" evidence="27">
    <location>
        <begin position="714"/>
        <end position="719"/>
    </location>
</feature>
<feature type="turn" evidence="27">
    <location>
        <begin position="720"/>
        <end position="723"/>
    </location>
</feature>
<feature type="helix" evidence="27">
    <location>
        <begin position="724"/>
        <end position="729"/>
    </location>
</feature>
<feature type="strand" evidence="27">
    <location>
        <begin position="734"/>
        <end position="737"/>
    </location>
</feature>
<feature type="turn" evidence="25">
    <location>
        <begin position="740"/>
        <end position="743"/>
    </location>
</feature>
<feature type="helix" evidence="27">
    <location>
        <begin position="753"/>
        <end position="764"/>
    </location>
</feature>
<feature type="helix" evidence="27">
    <location>
        <begin position="832"/>
        <end position="836"/>
    </location>
</feature>